<gene>
    <name type="primary">ytcA</name>
    <name type="ordered locus">Ecok1_40750</name>
    <name type="ORF">APECO1_2368</name>
</gene>
<protein>
    <recommendedName>
        <fullName>Uncharacterized protein YtcA</fullName>
    </recommendedName>
</protein>
<dbReference type="EMBL" id="CP000468">
    <property type="protein sequence ID" value="ABJ03569.1"/>
    <property type="molecule type" value="Genomic_DNA"/>
</dbReference>
<dbReference type="RefSeq" id="WP_001317551.1">
    <property type="nucleotide sequence ID" value="NZ_CADILS010000008.1"/>
</dbReference>
<dbReference type="KEGG" id="ecv:APECO1_2368"/>
<dbReference type="HOGENOM" id="CLU_157779_1_0_6"/>
<dbReference type="Proteomes" id="UP000008216">
    <property type="component" value="Chromosome"/>
</dbReference>
<dbReference type="GO" id="GO:0005886">
    <property type="term" value="C:plasma membrane"/>
    <property type="evidence" value="ECO:0007669"/>
    <property type="project" value="UniProtKB-SubCell"/>
</dbReference>
<dbReference type="InterPro" id="IPR031381">
    <property type="entry name" value="YtcA"/>
</dbReference>
<dbReference type="Pfam" id="PF17090">
    <property type="entry name" value="Ytca"/>
    <property type="match status" value="1"/>
</dbReference>
<dbReference type="PROSITE" id="PS51257">
    <property type="entry name" value="PROKAR_LIPOPROTEIN"/>
    <property type="match status" value="1"/>
</dbReference>
<proteinExistence type="inferred from homology"/>
<organism>
    <name type="scientific">Escherichia coli O1:K1 / APEC</name>
    <dbReference type="NCBI Taxonomy" id="405955"/>
    <lineage>
        <taxon>Bacteria</taxon>
        <taxon>Pseudomonadati</taxon>
        <taxon>Pseudomonadota</taxon>
        <taxon>Gammaproteobacteria</taxon>
        <taxon>Enterobacterales</taxon>
        <taxon>Enterobacteriaceae</taxon>
        <taxon>Escherichia</taxon>
    </lineage>
</organism>
<sequence length="91" mass="10271">MPTVLSRMAMQLKKTAWIIPVFMVSGCSLSPAIPVIGAYYPGWFFCAIASLILTLITRRIIQRTNINLAFVGIIYTALFALYAMLFWLAFF</sequence>
<accession>A1AIS9</accession>
<reference key="1">
    <citation type="journal article" date="2007" name="J. Bacteriol.">
        <title>The genome sequence of avian pathogenic Escherichia coli strain O1:K1:H7 shares strong similarities with human extraintestinal pathogenic E. coli genomes.</title>
        <authorList>
            <person name="Johnson T.J."/>
            <person name="Kariyawasam S."/>
            <person name="Wannemuehler Y."/>
            <person name="Mangiamele P."/>
            <person name="Johnson S.J."/>
            <person name="Doetkott C."/>
            <person name="Skyberg J.A."/>
            <person name="Lynne A.M."/>
            <person name="Johnson J.R."/>
            <person name="Nolan L.K."/>
        </authorList>
    </citation>
    <scope>NUCLEOTIDE SEQUENCE [LARGE SCALE GENOMIC DNA]</scope>
</reference>
<evidence type="ECO:0000255" key="1"/>
<evidence type="ECO:0000255" key="2">
    <source>
        <dbReference type="PROSITE-ProRule" id="PRU00303"/>
    </source>
</evidence>
<evidence type="ECO:0000305" key="3"/>
<comment type="subcellular location">
    <subcellularLocation>
        <location evidence="2">Cell membrane</location>
        <topology evidence="2">Lipid-anchor</topology>
    </subcellularLocation>
    <subcellularLocation>
        <location evidence="3">Membrane</location>
        <topology evidence="3">Multi-pass membrane protein</topology>
    </subcellularLocation>
</comment>
<comment type="similarity">
    <text evidence="3">Belongs to the YtcA family.</text>
</comment>
<name>YTCA_ECOK1</name>
<feature type="signal peptide" evidence="2">
    <location>
        <begin position="1"/>
        <end position="26"/>
    </location>
</feature>
<feature type="chain" id="PRO_0000311871" description="Uncharacterized protein YtcA">
    <location>
        <begin position="27"/>
        <end position="91"/>
    </location>
</feature>
<feature type="transmembrane region" description="Helical" evidence="1">
    <location>
        <begin position="33"/>
        <end position="53"/>
    </location>
</feature>
<feature type="transmembrane region" description="Helical" evidence="1">
    <location>
        <begin position="70"/>
        <end position="90"/>
    </location>
</feature>
<feature type="lipid moiety-binding region" description="N-palmitoyl cysteine" evidence="2">
    <location>
        <position position="27"/>
    </location>
</feature>
<feature type="lipid moiety-binding region" description="S-diacylglycerol cysteine" evidence="2">
    <location>
        <position position="27"/>
    </location>
</feature>
<keyword id="KW-1003">Cell membrane</keyword>
<keyword id="KW-0449">Lipoprotein</keyword>
<keyword id="KW-0472">Membrane</keyword>
<keyword id="KW-0564">Palmitate</keyword>
<keyword id="KW-1185">Reference proteome</keyword>
<keyword id="KW-0732">Signal</keyword>
<keyword id="KW-0812">Transmembrane</keyword>
<keyword id="KW-1133">Transmembrane helix</keyword>